<dbReference type="EC" id="2.7.1.21" evidence="1"/>
<dbReference type="EMBL" id="CP000812">
    <property type="protein sequence ID" value="ABV34047.1"/>
    <property type="molecule type" value="Genomic_DNA"/>
</dbReference>
<dbReference type="RefSeq" id="WP_012003523.1">
    <property type="nucleotide sequence ID" value="NZ_BSDV01000001.1"/>
</dbReference>
<dbReference type="SMR" id="A8F7B3"/>
<dbReference type="STRING" id="416591.Tlet_1491"/>
<dbReference type="KEGG" id="tle:Tlet_1491"/>
<dbReference type="eggNOG" id="COG1435">
    <property type="taxonomic scope" value="Bacteria"/>
</dbReference>
<dbReference type="HOGENOM" id="CLU_064400_3_0_0"/>
<dbReference type="OrthoDB" id="9781579at2"/>
<dbReference type="Proteomes" id="UP000002016">
    <property type="component" value="Chromosome"/>
</dbReference>
<dbReference type="GO" id="GO:0005829">
    <property type="term" value="C:cytosol"/>
    <property type="evidence" value="ECO:0007669"/>
    <property type="project" value="TreeGrafter"/>
</dbReference>
<dbReference type="GO" id="GO:0005524">
    <property type="term" value="F:ATP binding"/>
    <property type="evidence" value="ECO:0007669"/>
    <property type="project" value="UniProtKB-UniRule"/>
</dbReference>
<dbReference type="GO" id="GO:0004797">
    <property type="term" value="F:thymidine kinase activity"/>
    <property type="evidence" value="ECO:0007669"/>
    <property type="project" value="UniProtKB-UniRule"/>
</dbReference>
<dbReference type="GO" id="GO:0008270">
    <property type="term" value="F:zinc ion binding"/>
    <property type="evidence" value="ECO:0007669"/>
    <property type="project" value="UniProtKB-UniRule"/>
</dbReference>
<dbReference type="GO" id="GO:0071897">
    <property type="term" value="P:DNA biosynthetic process"/>
    <property type="evidence" value="ECO:0007669"/>
    <property type="project" value="UniProtKB-KW"/>
</dbReference>
<dbReference type="GO" id="GO:0046104">
    <property type="term" value="P:thymidine metabolic process"/>
    <property type="evidence" value="ECO:0007669"/>
    <property type="project" value="TreeGrafter"/>
</dbReference>
<dbReference type="FunFam" id="3.40.50.300:FF:001270">
    <property type="entry name" value="Thymidine kinase"/>
    <property type="match status" value="1"/>
</dbReference>
<dbReference type="Gene3D" id="3.30.60.20">
    <property type="match status" value="1"/>
</dbReference>
<dbReference type="Gene3D" id="3.40.50.300">
    <property type="entry name" value="P-loop containing nucleotide triphosphate hydrolases"/>
    <property type="match status" value="1"/>
</dbReference>
<dbReference type="HAMAP" id="MF_00124">
    <property type="entry name" value="Thymidine_kinase"/>
    <property type="match status" value="1"/>
</dbReference>
<dbReference type="InterPro" id="IPR027417">
    <property type="entry name" value="P-loop_NTPase"/>
</dbReference>
<dbReference type="InterPro" id="IPR001267">
    <property type="entry name" value="Thymidine_kinase"/>
</dbReference>
<dbReference type="InterPro" id="IPR020633">
    <property type="entry name" value="Thymidine_kinase_CS"/>
</dbReference>
<dbReference type="NCBIfam" id="NF003296">
    <property type="entry name" value="PRK04296.1-1"/>
    <property type="match status" value="1"/>
</dbReference>
<dbReference type="PANTHER" id="PTHR11441">
    <property type="entry name" value="THYMIDINE KINASE"/>
    <property type="match status" value="1"/>
</dbReference>
<dbReference type="PANTHER" id="PTHR11441:SF0">
    <property type="entry name" value="THYMIDINE KINASE, CYTOSOLIC"/>
    <property type="match status" value="1"/>
</dbReference>
<dbReference type="Pfam" id="PF00265">
    <property type="entry name" value="TK"/>
    <property type="match status" value="1"/>
</dbReference>
<dbReference type="PIRSF" id="PIRSF035805">
    <property type="entry name" value="TK_cell"/>
    <property type="match status" value="1"/>
</dbReference>
<dbReference type="SUPFAM" id="SSF57716">
    <property type="entry name" value="Glucocorticoid receptor-like (DNA-binding domain)"/>
    <property type="match status" value="1"/>
</dbReference>
<dbReference type="SUPFAM" id="SSF52540">
    <property type="entry name" value="P-loop containing nucleoside triphosphate hydrolases"/>
    <property type="match status" value="1"/>
</dbReference>
<dbReference type="PROSITE" id="PS00603">
    <property type="entry name" value="TK_CELLULAR_TYPE"/>
    <property type="match status" value="1"/>
</dbReference>
<sequence>MAGKLTLIVGPMYSGKTTELLSYVEIYRLGRKKTIVFKPSLDNRYGVDCVKTHAGVEVEAIAVEKSADAMKYIKQPVDAVFVDEVQFFDKDLVKIVRQLLDQDVDIFCAGLDMTFKQNPFETTMLLMSLANEIIKKKAVCHICGEYNATLTYKFVQDDSEIDIGGKEKYIAVCRDCYNKVASKND</sequence>
<evidence type="ECO:0000255" key="1">
    <source>
        <dbReference type="HAMAP-Rule" id="MF_00124"/>
    </source>
</evidence>
<accession>A8F7B3</accession>
<protein>
    <recommendedName>
        <fullName evidence="1">Thymidine kinase</fullName>
        <ecNumber evidence="1">2.7.1.21</ecNumber>
    </recommendedName>
</protein>
<proteinExistence type="inferred from homology"/>
<organism>
    <name type="scientific">Pseudothermotoga lettingae (strain ATCC BAA-301 / DSM 14385 / NBRC 107922 / TMO)</name>
    <name type="common">Thermotoga lettingae</name>
    <dbReference type="NCBI Taxonomy" id="416591"/>
    <lineage>
        <taxon>Bacteria</taxon>
        <taxon>Thermotogati</taxon>
        <taxon>Thermotogota</taxon>
        <taxon>Thermotogae</taxon>
        <taxon>Thermotogales</taxon>
        <taxon>Thermotogaceae</taxon>
        <taxon>Pseudothermotoga</taxon>
    </lineage>
</organism>
<keyword id="KW-0067">ATP-binding</keyword>
<keyword id="KW-0963">Cytoplasm</keyword>
<keyword id="KW-0237">DNA synthesis</keyword>
<keyword id="KW-0418">Kinase</keyword>
<keyword id="KW-0479">Metal-binding</keyword>
<keyword id="KW-0547">Nucleotide-binding</keyword>
<keyword id="KW-1185">Reference proteome</keyword>
<keyword id="KW-0808">Transferase</keyword>
<keyword id="KW-0862">Zinc</keyword>
<comment type="catalytic activity">
    <reaction evidence="1">
        <text>thymidine + ATP = dTMP + ADP + H(+)</text>
        <dbReference type="Rhea" id="RHEA:19129"/>
        <dbReference type="ChEBI" id="CHEBI:15378"/>
        <dbReference type="ChEBI" id="CHEBI:17748"/>
        <dbReference type="ChEBI" id="CHEBI:30616"/>
        <dbReference type="ChEBI" id="CHEBI:63528"/>
        <dbReference type="ChEBI" id="CHEBI:456216"/>
        <dbReference type="EC" id="2.7.1.21"/>
    </reaction>
</comment>
<comment type="subunit">
    <text evidence="1">Homotetramer.</text>
</comment>
<comment type="subcellular location">
    <subcellularLocation>
        <location evidence="1">Cytoplasm</location>
    </subcellularLocation>
</comment>
<comment type="similarity">
    <text evidence="1">Belongs to the thymidine kinase family.</text>
</comment>
<reference key="1">
    <citation type="submission" date="2007-08" db="EMBL/GenBank/DDBJ databases">
        <title>Complete sequence of Thermotoga lettingae TMO.</title>
        <authorList>
            <consortium name="US DOE Joint Genome Institute"/>
            <person name="Copeland A."/>
            <person name="Lucas S."/>
            <person name="Lapidus A."/>
            <person name="Barry K."/>
            <person name="Glavina del Rio T."/>
            <person name="Dalin E."/>
            <person name="Tice H."/>
            <person name="Pitluck S."/>
            <person name="Foster B."/>
            <person name="Bruce D."/>
            <person name="Schmutz J."/>
            <person name="Larimer F."/>
            <person name="Land M."/>
            <person name="Hauser L."/>
            <person name="Kyrpides N."/>
            <person name="Mikhailova N."/>
            <person name="Nelson K."/>
            <person name="Gogarten J.P."/>
            <person name="Noll K."/>
            <person name="Richardson P."/>
        </authorList>
    </citation>
    <scope>NUCLEOTIDE SEQUENCE [LARGE SCALE GENOMIC DNA]</scope>
    <source>
        <strain>ATCC BAA-301 / DSM 14385 / NBRC 107922 / TMO</strain>
    </source>
</reference>
<feature type="chain" id="PRO_1000057815" description="Thymidine kinase">
    <location>
        <begin position="1"/>
        <end position="185"/>
    </location>
</feature>
<feature type="active site" description="Proton acceptor" evidence="1">
    <location>
        <position position="84"/>
    </location>
</feature>
<feature type="binding site" evidence="1">
    <location>
        <begin position="10"/>
        <end position="17"/>
    </location>
    <ligand>
        <name>ATP</name>
        <dbReference type="ChEBI" id="CHEBI:30616"/>
    </ligand>
</feature>
<feature type="binding site" evidence="1">
    <location>
        <begin position="83"/>
        <end position="86"/>
    </location>
    <ligand>
        <name>ATP</name>
        <dbReference type="ChEBI" id="CHEBI:30616"/>
    </ligand>
</feature>
<feature type="binding site" evidence="1">
    <location>
        <position position="140"/>
    </location>
    <ligand>
        <name>Zn(2+)</name>
        <dbReference type="ChEBI" id="CHEBI:29105"/>
    </ligand>
</feature>
<feature type="binding site" evidence="1">
    <location>
        <position position="143"/>
    </location>
    <ligand>
        <name>Zn(2+)</name>
        <dbReference type="ChEBI" id="CHEBI:29105"/>
    </ligand>
</feature>
<feature type="binding site" evidence="1">
    <location>
        <position position="173"/>
    </location>
    <ligand>
        <name>Zn(2+)</name>
        <dbReference type="ChEBI" id="CHEBI:29105"/>
    </ligand>
</feature>
<feature type="binding site" evidence="1">
    <location>
        <position position="176"/>
    </location>
    <ligand>
        <name>Zn(2+)</name>
        <dbReference type="ChEBI" id="CHEBI:29105"/>
    </ligand>
</feature>
<name>KITH_PSELT</name>
<gene>
    <name evidence="1" type="primary">tdk</name>
    <name type="ordered locus">Tlet_1491</name>
</gene>